<gene>
    <name evidence="10" type="primary">DMT5</name>
    <name evidence="9" type="synonym">DNMT5</name>
    <name evidence="12" type="ORF">CNAG_07552</name>
</gene>
<sequence>MTTALTFGGGLFKDNTKFDIDMRGTADGAVNGGNIPNSQSQKRKRASPSPEIESEEDGDDWYEIDYIADSRVIRRKGRQILQYLIHWAGYAVHERTWEDEDGIGGEDCALVQEFYRKNPGKPRLSPSSVRKEVKLARMVEVVITTRRIDGKSRAASSTDQPSPHRLGITSPQANNIGGEDPNPSLTRRPVRSTVSEIAKRPTSKKVHPNKKCKASSDDESDFVFEEGEWDEDEDDDNDVDFRSSEDDEDDEQERSAEEPESDEEIIKPAKKTKSSLPKAKLRPKPANLGGFVTGVRPLNQGLDIKAAVRNMSDDLPPISDIEAMFDHLVSRIPDIVELVRQLNGRKLRVATMCSGTESPLLALNMIAKAIKAQHGLTLAFEHVFSCEIEPFKQAYIERNFTPPILFRDVTELGKKRAHTAYGSMVDVPGDVDILIAGTSCVDYSNLNNVQQDIDANGESGRTFRGMLQWVKKHQPPIVILENVCNAPWDKVVEYFGQIDYDAQYTRLDTKEFYIPHTRTRVYLFATPSSSESDDLPEKWAQTVKDLRRPWSSPFEAFLLHTDDPNIHRARLELASARAQTDGTSRKTTDWNRCESRHQRARQDEALGLLRPLTSWQEAGVCKGLDWTWNDWLLAQTERVVDLLEISTLRMAKDGIDSGFKACIWNVSQNVDRQTGSSKTALAPCLTPNMIPWVTIRGGPVTGREALALQGIPVRELLLTSENEDQLADLAGNAMTTTVVGSAMIAALKVACHKITEGANPEKEAALILEKEAVDDEQVANRIIGEDYLEHHDLDLAKVTKSNLSEILDLACRSSRHCQCEGQSGTAPNILECQECSYRACKSCGGRPEHVYAPCANQRVEPAEFEKRFKGLLPMRVRIAGLTDQCLNAVRKAAEKSNKGSVNDNDWQLWSTALLEGIHDAEFRFRYLKRQSTWTAVYEARRAMLSLVLRNQIPEWRLTIKAPASEPNNSQLRALLLHPVARLQIDIAGQDVLCGPWELCIPSMKTIDIEITGKGELLPSWQASLGLQGPFANTTRWSEVEISLQAEDENTLDRKLSGTYQLLPRCGQAMSSLHKKRPDLSDDGLPQLYFFLDPTRCGESREDRYVFSTSTERLDYGTERPVIARLDSHWREGNEKQRKVKLDVSGAWVKCPEAHLTAIGGDDIAVVANDAAANEIHRDRATFAIPSSASAISASLTTEGCSHAMALLSCRVPLDPTHSESMWRRGAWAEIDLSHQGNTTFANLAWITERLPPLDGLKNWAHIADDVSEHVCERCAPRPPKIHWIKREGKANKKGNKTKSTIIAFEDKLEAGQYEHALKHRPSPFVVQLRLDQDIGSFRIGLNIVSLAHRALSRLPPTTSEHKISLSWRLTPGHVTESPQPRRVFILPSNKQDPENSQPEAFKLPLRKEQLRSLWWMLEQEKATGKTHTFVEEEISESLLPAVGWRAEGKAERPVMVRGGVIADQVGYGKTVISIALVAQTLSLPAPEPATPGLIDLKATLIVVPGHLSKQWPNEIARFTGSMFKVIVIQGMKDLQEKTIAELGKADIIVMASEIFESDVYWSRLEYLSAQPREWLHDTQGGRFFCDRLDAAMESLVSQTKILKEKGSEAAMRAMEDKKKSLVDNVGSKKEVHTAVNFGKRMKGQAYRDKHDSDSKAKPITKEELERWEASEDEDDDENSKTYIPIPKFHSFTGSESIFSASVKKDYKLLPNPVLHMFRFRRVIADEFTYLQKKSLAAVLRLSSSYRWILSGTPPVSDFAAIRSIATFMGIHLGVEDDGEGDVQYQKARAKDQTQAEKFHAFREVHSRAWHNRRDELAQEFLNVFVRQNIAEIEDIPTVEHIHTFKLPASEGAVYLELEHHLQALEMQARKETKFKNVSQGDRNARLEEALSDSKTAEEALLKRCCHFTLDLSDKTQDAKSAQEACDHITSARARQLLACQEDLSRSVNQAIALHGWIKKKGGFSKNDDERQPFAEWIAFSSNISKHQGDIEAARILLKVIEKCGVKDGNIPPSPSDKQSPSIASGAKMDDVKWQLREQTHLLRKLVKELVARVRSLRFFEVVRKIQKGKSDAQIVLESSECGHKPSTNPDIEMAILSCCGHVACHKCMRKAAASQRCVKSGECQAAVRPTNIVKVSSLGVEGELSSGRYGAKLEHLVNLIHSIPKNERVLVFLQWEDLAGKVSEALSAGRIPHVTLSGSAKSRANTLDRFQSTNADSARVLLLKMNDASAAGSNLTTANHAVFLGPLFTNSLFNYRAVETQAIGRVRRYGQQKKVHIHRLLALDTIDMTIFNARRTELKEKTDWEEIPQEEYKGRGSSISMTNEKRTPTLTVKSNPFKRSSSWALASSFRSKKRSMEARDAEGVSDDDENSELSDII</sequence>
<feature type="chain" id="PRO_0000454226" description="DNA (cytosine-5-)-methyltransferase DMT5">
    <location>
        <begin position="1"/>
        <end position="2377"/>
    </location>
</feature>
<feature type="domain" description="Chromo; shadow subtype" evidence="1">
    <location>
        <begin position="62"/>
        <end position="126"/>
    </location>
</feature>
<feature type="domain" description="SAM-dependent MTase C5-type" evidence="4">
    <location>
        <begin position="347"/>
        <end position="753"/>
    </location>
</feature>
<feature type="domain" description="Helicase ATP-binding" evidence="2">
    <location>
        <begin position="1450"/>
        <end position="1771"/>
    </location>
</feature>
<feature type="domain" description="Helicase C-terminal" evidence="3">
    <location>
        <begin position="2152"/>
        <end position="2315"/>
    </location>
</feature>
<feature type="region of interest" description="Disordered" evidence="5">
    <location>
        <begin position="24"/>
        <end position="56"/>
    </location>
</feature>
<feature type="region of interest" description="Disordered" evidence="5">
    <location>
        <begin position="150"/>
        <end position="282"/>
    </location>
</feature>
<feature type="region of interest" description="Disordered" evidence="5">
    <location>
        <begin position="1642"/>
        <end position="1680"/>
    </location>
</feature>
<feature type="region of interest" description="Disordered" evidence="5">
    <location>
        <begin position="2313"/>
        <end position="2334"/>
    </location>
</feature>
<feature type="region of interest" description="Disordered" evidence="5">
    <location>
        <begin position="2347"/>
        <end position="2377"/>
    </location>
</feature>
<feature type="compositionally biased region" description="Basic residues" evidence="5">
    <location>
        <begin position="201"/>
        <end position="213"/>
    </location>
</feature>
<feature type="compositionally biased region" description="Acidic residues" evidence="5">
    <location>
        <begin position="217"/>
        <end position="238"/>
    </location>
</feature>
<feature type="compositionally biased region" description="Acidic residues" evidence="5">
    <location>
        <begin position="245"/>
        <end position="263"/>
    </location>
</feature>
<feature type="compositionally biased region" description="Basic residues" evidence="5">
    <location>
        <begin position="268"/>
        <end position="282"/>
    </location>
</feature>
<feature type="compositionally biased region" description="Basic and acidic residues" evidence="5">
    <location>
        <begin position="1645"/>
        <end position="1669"/>
    </location>
</feature>
<feature type="compositionally biased region" description="Polar residues" evidence="5">
    <location>
        <begin position="2317"/>
        <end position="2334"/>
    </location>
</feature>
<feature type="compositionally biased region" description="Acidic residues" evidence="5">
    <location>
        <begin position="2363"/>
        <end position="2377"/>
    </location>
</feature>
<feature type="active site" evidence="4">
    <location>
        <position position="440"/>
    </location>
</feature>
<feature type="binding site" evidence="2">
    <location>
        <begin position="1463"/>
        <end position="1470"/>
    </location>
    <ligand>
        <name>ATP</name>
        <dbReference type="ChEBI" id="CHEBI:30616"/>
    </ligand>
</feature>
<feature type="mutagenesis site" description="Severely decreases binding to histone H3 trimethylated on 'Lys-9'." evidence="7">
    <original>WAGY</original>
    <variation>AAGA</variation>
    <location>
        <begin position="87"/>
        <end position="90"/>
    </location>
</feature>
<feature type="mutagenesis site" description="Abolishes methylation of the fifth carbon of cytosine (5mC) in DNA." evidence="7">
    <original>C</original>
    <variation>A</variation>
    <location>
        <position position="440"/>
    </location>
</feature>
<feature type="mutagenesis site" description="Abolishes methylation of the fifth carbon of cytosine (5mC) in DNA. Abolishes methyltransferase activity and severely impairs ATPase activity." evidence="7 8">
    <original>K</original>
    <variation>A</variation>
    <location>
        <position position="1469"/>
    </location>
</feature>
<feature type="turn" evidence="15">
    <location>
        <begin position="305"/>
        <end position="309"/>
    </location>
</feature>
<feature type="strand" evidence="15">
    <location>
        <begin position="313"/>
        <end position="315"/>
    </location>
</feature>
<feature type="helix" evidence="15">
    <location>
        <begin position="321"/>
        <end position="331"/>
    </location>
</feature>
<feature type="helix" evidence="15">
    <location>
        <begin position="333"/>
        <end position="335"/>
    </location>
</feature>
<feature type="helix" evidence="15">
    <location>
        <begin position="336"/>
        <end position="341"/>
    </location>
</feature>
<feature type="strand" evidence="15">
    <location>
        <begin position="342"/>
        <end position="344"/>
    </location>
</feature>
<feature type="strand" evidence="15">
    <location>
        <begin position="347"/>
        <end position="353"/>
    </location>
</feature>
<feature type="helix" evidence="15">
    <location>
        <begin position="358"/>
        <end position="374"/>
    </location>
</feature>
<feature type="strand" evidence="15">
    <location>
        <begin position="380"/>
        <end position="386"/>
    </location>
</feature>
<feature type="helix" evidence="15">
    <location>
        <begin position="390"/>
        <end position="399"/>
    </location>
</feature>
<feature type="strand" evidence="15">
    <location>
        <begin position="405"/>
        <end position="407"/>
    </location>
</feature>
<feature type="strand" evidence="15">
    <location>
        <begin position="412"/>
        <end position="417"/>
    </location>
</feature>
<feature type="strand" evidence="15">
    <location>
        <begin position="419"/>
        <end position="422"/>
    </location>
</feature>
<feature type="strand" evidence="15">
    <location>
        <begin position="432"/>
        <end position="441"/>
    </location>
</feature>
<feature type="helix" evidence="15">
    <location>
        <begin position="461"/>
        <end position="472"/>
    </location>
</feature>
<feature type="strand" evidence="15">
    <location>
        <begin position="478"/>
        <end position="482"/>
    </location>
</feature>
<feature type="strand" evidence="15">
    <location>
        <begin position="484"/>
        <end position="486"/>
    </location>
</feature>
<feature type="helix" evidence="15">
    <location>
        <begin position="488"/>
        <end position="497"/>
    </location>
</feature>
<feature type="strand" evidence="15">
    <location>
        <begin position="500"/>
        <end position="508"/>
    </location>
</feature>
<feature type="helix" evidence="15">
    <location>
        <begin position="509"/>
        <end position="511"/>
    </location>
</feature>
<feature type="strand" evidence="15">
    <location>
        <begin position="519"/>
        <end position="527"/>
    </location>
</feature>
<feature type="helix" evidence="15">
    <location>
        <begin position="535"/>
        <end position="545"/>
    </location>
</feature>
<feature type="helix" evidence="15">
    <location>
        <begin position="554"/>
        <end position="556"/>
    </location>
</feature>
<feature type="helix" evidence="15">
    <location>
        <begin position="564"/>
        <end position="579"/>
    </location>
</feature>
<feature type="helix" evidence="15">
    <location>
        <begin position="591"/>
        <end position="603"/>
    </location>
</feature>
<feature type="strand" evidence="16">
    <location>
        <begin position="611"/>
        <end position="613"/>
    </location>
</feature>
<feature type="strand" evidence="16">
    <location>
        <begin position="616"/>
        <end position="619"/>
    </location>
</feature>
<feature type="strand" evidence="14">
    <location>
        <begin position="625"/>
        <end position="627"/>
    </location>
</feature>
<feature type="helix" evidence="15">
    <location>
        <begin position="629"/>
        <end position="632"/>
    </location>
</feature>
<feature type="helix" evidence="15">
    <location>
        <begin position="637"/>
        <end position="651"/>
    </location>
</feature>
<feature type="turn" evidence="15">
    <location>
        <begin position="652"/>
        <end position="654"/>
    </location>
</feature>
<feature type="strand" evidence="15">
    <location>
        <begin position="663"/>
        <end position="665"/>
    </location>
</feature>
<feature type="strand" evidence="15">
    <location>
        <begin position="670"/>
        <end position="672"/>
    </location>
</feature>
<feature type="strand" evidence="15">
    <location>
        <begin position="691"/>
        <end position="693"/>
    </location>
</feature>
<feature type="turn" evidence="15">
    <location>
        <begin position="694"/>
        <end position="697"/>
    </location>
</feature>
<feature type="helix" evidence="15">
    <location>
        <begin position="702"/>
        <end position="707"/>
    </location>
</feature>
<feature type="turn" evidence="15">
    <location>
        <begin position="708"/>
        <end position="710"/>
    </location>
</feature>
<feature type="helix" evidence="15">
    <location>
        <begin position="713"/>
        <end position="715"/>
    </location>
</feature>
<feature type="helix" evidence="15">
    <location>
        <begin position="723"/>
        <end position="732"/>
    </location>
</feature>
<feature type="helix" evidence="15">
    <location>
        <begin position="736"/>
        <end position="749"/>
    </location>
</feature>
<feature type="turn" evidence="15">
    <location>
        <begin position="751"/>
        <end position="753"/>
    </location>
</feature>
<feature type="helix" evidence="15">
    <location>
        <begin position="760"/>
        <end position="779"/>
    </location>
</feature>
<feature type="strand" evidence="15">
    <location>
        <begin position="781"/>
        <end position="783"/>
    </location>
</feature>
<feature type="strand" evidence="15">
    <location>
        <begin position="786"/>
        <end position="788"/>
    </location>
</feature>
<feature type="helix" evidence="15">
    <location>
        <begin position="803"/>
        <end position="813"/>
    </location>
</feature>
<feature type="helix" evidence="15">
    <location>
        <begin position="818"/>
        <end position="820"/>
    </location>
</feature>
<feature type="turn" evidence="15">
    <location>
        <begin position="821"/>
        <end position="823"/>
    </location>
</feature>
<feature type="strand" evidence="16">
    <location>
        <begin position="829"/>
        <end position="831"/>
    </location>
</feature>
<feature type="strand" evidence="15">
    <location>
        <begin position="833"/>
        <end position="835"/>
    </location>
</feature>
<feature type="strand" evidence="15">
    <location>
        <begin position="841"/>
        <end position="843"/>
    </location>
</feature>
<feature type="strand" evidence="14">
    <location>
        <begin position="851"/>
        <end position="853"/>
    </location>
</feature>
<feature type="helix" evidence="15">
    <location>
        <begin position="861"/>
        <end position="871"/>
    </location>
</feature>
<feature type="strand" evidence="15">
    <location>
        <begin position="874"/>
        <end position="880"/>
    </location>
</feature>
<feature type="helix" evidence="15">
    <location>
        <begin position="883"/>
        <end position="895"/>
    </location>
</feature>
<feature type="strand" evidence="15">
    <location>
        <begin position="896"/>
        <end position="898"/>
    </location>
</feature>
<feature type="helix" evidence="15">
    <location>
        <begin position="903"/>
        <end position="917"/>
    </location>
</feature>
<feature type="strand" evidence="15">
    <location>
        <begin position="922"/>
        <end position="928"/>
    </location>
</feature>
<feature type="strand" evidence="15">
    <location>
        <begin position="930"/>
        <end position="938"/>
    </location>
</feature>
<feature type="strand" evidence="15">
    <location>
        <begin position="940"/>
        <end position="948"/>
    </location>
</feature>
<feature type="strand" evidence="15">
    <location>
        <begin position="950"/>
        <end position="952"/>
    </location>
</feature>
<feature type="strand" evidence="15">
    <location>
        <begin position="954"/>
        <end position="959"/>
    </location>
</feature>
<feature type="helix" evidence="15">
    <location>
        <begin position="970"/>
        <end position="974"/>
    </location>
</feature>
<feature type="strand" evidence="15">
    <location>
        <begin position="979"/>
        <end position="983"/>
    </location>
</feature>
<feature type="strand" evidence="14">
    <location>
        <begin position="989"/>
        <end position="992"/>
    </location>
</feature>
<feature type="strand" evidence="15">
    <location>
        <begin position="996"/>
        <end position="1018"/>
    </location>
</feature>
<feature type="helix" evidence="15">
    <location>
        <begin position="1020"/>
        <end position="1024"/>
    </location>
</feature>
<feature type="turn" evidence="15">
    <location>
        <begin position="1029"/>
        <end position="1032"/>
    </location>
</feature>
<feature type="strand" evidence="15">
    <location>
        <begin position="1034"/>
        <end position="1042"/>
    </location>
</feature>
<feature type="helix" evidence="15">
    <location>
        <begin position="1045"/>
        <end position="1050"/>
    </location>
</feature>
<feature type="strand" evidence="15">
    <location>
        <begin position="1051"/>
        <end position="1053"/>
    </location>
</feature>
<feature type="strand" evidence="15">
    <location>
        <begin position="1057"/>
        <end position="1061"/>
    </location>
</feature>
<feature type="strand" evidence="15">
    <location>
        <begin position="1073"/>
        <end position="1075"/>
    </location>
</feature>
<feature type="strand" evidence="15">
    <location>
        <begin position="1082"/>
        <end position="1084"/>
    </location>
</feature>
<feature type="strand" evidence="15">
    <location>
        <begin position="1088"/>
        <end position="1092"/>
    </location>
</feature>
<feature type="strand" evidence="15">
    <location>
        <begin position="1095"/>
        <end position="1097"/>
    </location>
</feature>
<feature type="helix" evidence="15">
    <location>
        <begin position="1099"/>
        <end position="1101"/>
    </location>
</feature>
<feature type="strand" evidence="15">
    <location>
        <begin position="1103"/>
        <end position="1108"/>
    </location>
</feature>
<feature type="strand" evidence="15">
    <location>
        <begin position="1122"/>
        <end position="1124"/>
    </location>
</feature>
<feature type="strand" evidence="15">
    <location>
        <begin position="1136"/>
        <end position="1149"/>
    </location>
</feature>
<feature type="strand" evidence="15">
    <location>
        <begin position="1154"/>
        <end position="1157"/>
    </location>
</feature>
<feature type="strand" evidence="15">
    <location>
        <begin position="1181"/>
        <end position="1183"/>
    </location>
</feature>
<feature type="strand" evidence="15">
    <location>
        <begin position="1185"/>
        <end position="1187"/>
    </location>
</feature>
<feature type="helix" evidence="15">
    <location>
        <begin position="1190"/>
        <end position="1194"/>
    </location>
</feature>
<feature type="helix" evidence="15">
    <location>
        <begin position="1199"/>
        <end position="1201"/>
    </location>
</feature>
<feature type="strand" evidence="15">
    <location>
        <begin position="1203"/>
        <end position="1212"/>
    </location>
</feature>
<feature type="strand" evidence="15">
    <location>
        <begin position="1224"/>
        <end position="1226"/>
    </location>
</feature>
<feature type="strand" evidence="16">
    <location>
        <begin position="1228"/>
        <end position="1230"/>
    </location>
</feature>
<feature type="helix" evidence="15">
    <location>
        <begin position="1232"/>
        <end position="1239"/>
    </location>
</feature>
<feature type="turn" evidence="15">
    <location>
        <begin position="1240"/>
        <end position="1243"/>
    </location>
</feature>
<feature type="helix" evidence="15">
    <location>
        <begin position="1244"/>
        <end position="1247"/>
    </location>
</feature>
<feature type="strand" evidence="16">
    <location>
        <begin position="1264"/>
        <end position="1267"/>
    </location>
</feature>
<feature type="strand" evidence="15">
    <location>
        <begin position="1272"/>
        <end position="1275"/>
    </location>
</feature>
<feature type="strand" evidence="14">
    <location>
        <begin position="1281"/>
        <end position="1283"/>
    </location>
</feature>
<feature type="strand" evidence="14">
    <location>
        <begin position="1303"/>
        <end position="1305"/>
    </location>
</feature>
<feature type="helix" evidence="15">
    <location>
        <begin position="1307"/>
        <end position="1318"/>
    </location>
</feature>
<feature type="strand" evidence="15">
    <location>
        <begin position="1323"/>
        <end position="1341"/>
    </location>
</feature>
<feature type="helix" evidence="15">
    <location>
        <begin position="1343"/>
        <end position="1353"/>
    </location>
</feature>
<feature type="strand" evidence="15">
    <location>
        <begin position="1363"/>
        <end position="1372"/>
    </location>
</feature>
<feature type="strand" evidence="16">
    <location>
        <begin position="1389"/>
        <end position="1392"/>
    </location>
</feature>
<feature type="helix" evidence="15">
    <location>
        <begin position="1407"/>
        <end position="1421"/>
    </location>
</feature>
<feature type="strand" evidence="15">
    <location>
        <begin position="1428"/>
        <end position="1431"/>
    </location>
</feature>
<feature type="strand" evidence="15">
    <location>
        <begin position="1434"/>
        <end position="1439"/>
    </location>
</feature>
<feature type="turn" evidence="15">
    <location>
        <begin position="1440"/>
        <end position="1443"/>
    </location>
</feature>
<feature type="strand" evidence="15">
    <location>
        <begin position="1444"/>
        <end position="1454"/>
    </location>
</feature>
<feature type="strand" evidence="15">
    <location>
        <begin position="1458"/>
        <end position="1462"/>
    </location>
</feature>
<feature type="helix" evidence="15">
    <location>
        <begin position="1470"/>
        <end position="1479"/>
    </location>
</feature>
<feature type="strand" evidence="15">
    <location>
        <begin position="1491"/>
        <end position="1495"/>
    </location>
</feature>
<feature type="strand" evidence="15">
    <location>
        <begin position="1499"/>
        <end position="1503"/>
    </location>
</feature>
<feature type="turn" evidence="15">
    <location>
        <begin position="1506"/>
        <end position="1509"/>
    </location>
</feature>
<feature type="helix" evidence="15">
    <location>
        <begin position="1510"/>
        <end position="1518"/>
    </location>
</feature>
<feature type="strand" evidence="15">
    <location>
        <begin position="1519"/>
        <end position="1523"/>
    </location>
</feature>
<feature type="strand" evidence="14">
    <location>
        <begin position="1525"/>
        <end position="1528"/>
    </location>
</feature>
<feature type="turn" evidence="15">
    <location>
        <begin position="1532"/>
        <end position="1536"/>
    </location>
</feature>
<feature type="helix" evidence="15">
    <location>
        <begin position="1539"/>
        <end position="1542"/>
    </location>
</feature>
<feature type="strand" evidence="15">
    <location>
        <begin position="1548"/>
        <end position="1551"/>
    </location>
</feature>
<feature type="helix" evidence="15">
    <location>
        <begin position="1552"/>
        <end position="1556"/>
    </location>
</feature>
<feature type="helix" evidence="15">
    <location>
        <begin position="1558"/>
        <end position="1568"/>
    </location>
</feature>
<feature type="turn" evidence="14">
    <location>
        <begin position="1572"/>
        <end position="1575"/>
    </location>
</feature>
<feature type="helix" evidence="15">
    <location>
        <begin position="1582"/>
        <end position="1600"/>
    </location>
</feature>
<feature type="turn" evidence="16">
    <location>
        <begin position="1603"/>
        <end position="1605"/>
    </location>
</feature>
<feature type="helix" evidence="16">
    <location>
        <begin position="1611"/>
        <end position="1621"/>
    </location>
</feature>
<feature type="strand" evidence="16">
    <location>
        <begin position="1629"/>
        <end position="1631"/>
    </location>
</feature>
<feature type="helix" evidence="15">
    <location>
        <begin position="1714"/>
        <end position="1716"/>
    </location>
</feature>
<feature type="strand" evidence="15">
    <location>
        <begin position="1717"/>
        <end position="1725"/>
    </location>
</feature>
<feature type="strand" evidence="15">
    <location>
        <begin position="1727"/>
        <end position="1729"/>
    </location>
</feature>
<feature type="strand" evidence="15">
    <location>
        <begin position="1732"/>
        <end position="1734"/>
    </location>
</feature>
<feature type="helix" evidence="15">
    <location>
        <begin position="1735"/>
        <end position="1740"/>
    </location>
</feature>
<feature type="strand" evidence="15">
    <location>
        <begin position="1743"/>
        <end position="1752"/>
    </location>
</feature>
<feature type="helix" evidence="15">
    <location>
        <begin position="1758"/>
        <end position="1768"/>
    </location>
</feature>
<feature type="strand" evidence="15">
    <location>
        <begin position="1777"/>
        <end position="1780"/>
    </location>
</feature>
<feature type="helix" evidence="15">
    <location>
        <begin position="1782"/>
        <end position="1789"/>
    </location>
</feature>
<feature type="helix" evidence="15">
    <location>
        <begin position="1794"/>
        <end position="1802"/>
    </location>
</feature>
<feature type="helix" evidence="15">
    <location>
        <begin position="1807"/>
        <end position="1824"/>
    </location>
</feature>
<feature type="strand" evidence="15">
    <location>
        <begin position="1837"/>
        <end position="1844"/>
    </location>
</feature>
<feature type="helix" evidence="15">
    <location>
        <begin position="1848"/>
        <end position="1863"/>
    </location>
</feature>
<feature type="helix" evidence="15">
    <location>
        <begin position="1877"/>
        <end position="1887"/>
    </location>
</feature>
<feature type="helix" evidence="15">
    <location>
        <begin position="1896"/>
        <end position="1905"/>
    </location>
</feature>
<feature type="strand" evidence="16">
    <location>
        <begin position="1911"/>
        <end position="1914"/>
    </location>
</feature>
<feature type="helix" evidence="15">
    <location>
        <begin position="1923"/>
        <end position="1960"/>
    </location>
</feature>
<feature type="helix" evidence="15">
    <location>
        <begin position="1972"/>
        <end position="1980"/>
    </location>
</feature>
<feature type="strand" evidence="14">
    <location>
        <begin position="1982"/>
        <end position="1987"/>
    </location>
</feature>
<feature type="helix" evidence="15">
    <location>
        <begin position="1990"/>
        <end position="2002"/>
    </location>
</feature>
<feature type="strand" evidence="15">
    <location>
        <begin position="2006"/>
        <end position="2008"/>
    </location>
</feature>
<feature type="helix" evidence="15">
    <location>
        <begin position="2028"/>
        <end position="2067"/>
    </location>
</feature>
<feature type="helix" evidence="15">
    <location>
        <begin position="2070"/>
        <end position="2077"/>
    </location>
</feature>
<feature type="strand" evidence="15">
    <location>
        <begin position="2080"/>
        <end position="2082"/>
    </location>
</feature>
<feature type="turn" evidence="16">
    <location>
        <begin position="2085"/>
        <end position="2087"/>
    </location>
</feature>
<feature type="strand" evidence="15">
    <location>
        <begin position="2094"/>
        <end position="2099"/>
    </location>
</feature>
<feature type="helix" evidence="15">
    <location>
        <begin position="2106"/>
        <end position="2113"/>
    </location>
</feature>
<feature type="turn" evidence="15">
    <location>
        <begin position="2120"/>
        <end position="2122"/>
    </location>
</feature>
<feature type="helix" evidence="15">
    <location>
        <begin position="2129"/>
        <end position="2131"/>
    </location>
</feature>
<feature type="strand" evidence="15">
    <location>
        <begin position="2132"/>
        <end position="2134"/>
    </location>
</feature>
<feature type="helix" evidence="15">
    <location>
        <begin position="2135"/>
        <end position="2138"/>
    </location>
</feature>
<feature type="helix" evidence="15">
    <location>
        <begin position="2151"/>
        <end position="2162"/>
    </location>
</feature>
<feature type="strand" evidence="15">
    <location>
        <begin position="2165"/>
        <end position="2167"/>
    </location>
</feature>
<feature type="strand" evidence="15">
    <location>
        <begin position="2170"/>
        <end position="2174"/>
    </location>
</feature>
<feature type="helix" evidence="15">
    <location>
        <begin position="2177"/>
        <end position="2188"/>
    </location>
</feature>
<feature type="strand" evidence="16">
    <location>
        <begin position="2193"/>
        <end position="2196"/>
    </location>
</feature>
<feature type="strand" evidence="14">
    <location>
        <begin position="2198"/>
        <end position="2201"/>
    </location>
</feature>
<feature type="helix" evidence="15">
    <location>
        <begin position="2202"/>
        <end position="2210"/>
    </location>
</feature>
<feature type="strand" evidence="15">
    <location>
        <begin position="2220"/>
        <end position="2225"/>
    </location>
</feature>
<feature type="helix" evidence="16">
    <location>
        <begin position="2228"/>
        <end position="2230"/>
    </location>
</feature>
<feature type="strand" evidence="15">
    <location>
        <begin position="2240"/>
        <end position="2245"/>
    </location>
</feature>
<feature type="helix" evidence="15">
    <location>
        <begin position="2252"/>
        <end position="2266"/>
    </location>
</feature>
<feature type="strand" evidence="15">
    <location>
        <begin position="2267"/>
        <end position="2269"/>
    </location>
</feature>
<feature type="strand" evidence="15">
    <location>
        <begin position="2275"/>
        <end position="2282"/>
    </location>
</feature>
<feature type="helix" evidence="15">
    <location>
        <begin position="2286"/>
        <end position="2302"/>
    </location>
</feature>
<organism evidence="13">
    <name type="scientific">Cryptococcus neoformans var. grubii serotype A (strain H99 / ATCC 208821 / CBS 10515 / FGSC 9487)</name>
    <name type="common">Filobasidiella neoformans var. grubii</name>
    <dbReference type="NCBI Taxonomy" id="235443"/>
    <lineage>
        <taxon>Eukaryota</taxon>
        <taxon>Fungi</taxon>
        <taxon>Dikarya</taxon>
        <taxon>Basidiomycota</taxon>
        <taxon>Agaricomycotina</taxon>
        <taxon>Tremellomycetes</taxon>
        <taxon>Tremellales</taxon>
        <taxon>Cryptococcaceae</taxon>
        <taxon>Cryptococcus</taxon>
        <taxon>Cryptococcus neoformans species complex</taxon>
    </lineage>
</organism>
<protein>
    <recommendedName>
        <fullName evidence="10">DNA (cytosine-5-)-methyltransferase DMT5</fullName>
        <ecNumber evidence="7 8">3.6.4.-</ecNumber>
    </recommendedName>
</protein>
<proteinExistence type="evidence at protein level"/>
<name>DMT5_CRYNH</name>
<comment type="function">
    <text evidence="6 7 8 9">ATP-dependent cytosine methylase that maintains DNA methylation by acting at hemimethylated palindromic 5'-CG-3' sites to produce symmetrically methylated DNA strands (PubMed:24630728, PubMed:31955845, PubMed:32437639). DNA methylation may play a role in transcriptional silencing, particularly at transposable elements (PubMed:24630728).</text>
</comment>
<comment type="catalytic activity">
    <reaction evidence="7 8">
        <text>a 2'-deoxycytidine in DNA + S-adenosyl-L-methionine + ATP + H2O = a 5-methyl-2'-deoxycytidine in DNA + S-adenosyl-L-homocysteine + ADP + phosphate + 2 H(+)</text>
        <dbReference type="Rhea" id="RHEA:68984"/>
        <dbReference type="Rhea" id="RHEA-COMP:11369"/>
        <dbReference type="Rhea" id="RHEA-COMP:11370"/>
        <dbReference type="ChEBI" id="CHEBI:15377"/>
        <dbReference type="ChEBI" id="CHEBI:15378"/>
        <dbReference type="ChEBI" id="CHEBI:30616"/>
        <dbReference type="ChEBI" id="CHEBI:43474"/>
        <dbReference type="ChEBI" id="CHEBI:57856"/>
        <dbReference type="ChEBI" id="CHEBI:59789"/>
        <dbReference type="ChEBI" id="CHEBI:85452"/>
        <dbReference type="ChEBI" id="CHEBI:85454"/>
        <dbReference type="ChEBI" id="CHEBI:456216"/>
    </reaction>
    <physiologicalReaction direction="left-to-right" evidence="7 8">
        <dbReference type="Rhea" id="RHEA:68985"/>
    </physiologicalReaction>
</comment>
<comment type="cofactor">
    <cofactor evidence="8">
        <name>Mg(2+)</name>
        <dbReference type="ChEBI" id="CHEBI:18420"/>
    </cofactor>
</comment>
<comment type="activity regulation">
    <text evidence="8">Hemimethylated DNA substrates stimulate ATP hydrolysis and this is a prerequisite for methyltransferase activity.</text>
</comment>
<comment type="biophysicochemical properties">
    <kinetics>
        <KM evidence="8">0.9 uM for ATP (in the presence of unmethylated DNA and at 23 degrees Celsius)</KM>
        <KM evidence="8">6.2 uM for ATP (in the presence of hemimethylated DNA and at 23 degrees Celsius)</KM>
        <text evidence="8">kcat is 5.0 min(-1) for ATP (in the presence of unmethylated DNA and at 23 degrees Celsius) (PubMed:32437639). kcat is 11.1 min(-1) for ATP (in the presence of hemimethylated DNA and at 23 degrees Celsius) (PubMed:32437639).</text>
    </kinetics>
</comment>
<comment type="subunit">
    <text evidence="7">Interacts with SWI6.</text>
</comment>
<comment type="subcellular location">
    <subcellularLocation>
        <location evidence="7">Nucleus</location>
    </subcellularLocation>
    <subcellularLocation>
        <location evidence="7">Chromosome</location>
    </subcellularLocation>
    <text evidence="7">Localizes to heterochromatin characterized by trimethylation of histone H3 'Lys-9'.</text>
</comment>
<comment type="domain">
    <text evidence="7">The chromo domain is involved in binding heterochromatin at histone H3 tails methylated on 'Lys-9'.</text>
</comment>
<comment type="domain">
    <text evidence="8">The helicase ATP-binding domain contributes to identifying hemi-methylated CG DNA motifs.</text>
</comment>
<comment type="domain">
    <text evidence="8">The SAM-dependent MTase C5-type domain is involved in hemimethylated DNA binding.</text>
</comment>
<comment type="disruption phenotype">
    <text evidence="6 7">Abolishes localization of DMT5 to DNA and abolishes methylation of the fifth carbon of cytosine (5mC) in DNA (PubMed:24630728, PubMed:31955845). Abnormal distribution of histone H3 'Lys-9' methylation (PubMed:31955845). Sensitive to thiabendazole (PubMed:31955845).</text>
</comment>
<comment type="similarity">
    <text evidence="4">In the N-terminal section; belongs to the class I-like SAM-binding methyltransferase superfamily. C5-methyltransferase family.</text>
</comment>
<comment type="similarity">
    <text evidence="11">In the C-terminal section; belongs to the SNF2/RAD54 helicase family.</text>
</comment>
<evidence type="ECO:0000255" key="1">
    <source>
        <dbReference type="PROSITE-ProRule" id="PRU00053"/>
    </source>
</evidence>
<evidence type="ECO:0000255" key="2">
    <source>
        <dbReference type="PROSITE-ProRule" id="PRU00541"/>
    </source>
</evidence>
<evidence type="ECO:0000255" key="3">
    <source>
        <dbReference type="PROSITE-ProRule" id="PRU00542"/>
    </source>
</evidence>
<evidence type="ECO:0000255" key="4">
    <source>
        <dbReference type="PROSITE-ProRule" id="PRU01016"/>
    </source>
</evidence>
<evidence type="ECO:0000256" key="5">
    <source>
        <dbReference type="SAM" id="MobiDB-lite"/>
    </source>
</evidence>
<evidence type="ECO:0000269" key="6">
    <source>
    </source>
</evidence>
<evidence type="ECO:0000269" key="7">
    <source>
    </source>
</evidence>
<evidence type="ECO:0000269" key="8">
    <source>
    </source>
</evidence>
<evidence type="ECO:0000303" key="9">
    <source>
    </source>
</evidence>
<evidence type="ECO:0000303" key="10">
    <source>
    </source>
</evidence>
<evidence type="ECO:0000305" key="11"/>
<evidence type="ECO:0000312" key="12">
    <source>
        <dbReference type="EMBL" id="AFR94062.2"/>
    </source>
</evidence>
<evidence type="ECO:0000312" key="13">
    <source>
        <dbReference type="Proteomes" id="UP000010091"/>
    </source>
</evidence>
<evidence type="ECO:0007829" key="14">
    <source>
        <dbReference type="PDB" id="7R76"/>
    </source>
</evidence>
<evidence type="ECO:0007829" key="15">
    <source>
        <dbReference type="PDB" id="7R77"/>
    </source>
</evidence>
<evidence type="ECO:0007829" key="16">
    <source>
        <dbReference type="PDB" id="7R78"/>
    </source>
</evidence>
<reference evidence="13" key="1">
    <citation type="journal article" date="2014" name="PLoS Genet.">
        <title>Analysis of the genome and transcriptome of Cryptococcus neoformans var. grubii reveals complex RNA expression and microevolution leading to virulence attenuation.</title>
        <authorList>
            <person name="Janbon G."/>
            <person name="Ormerod K.L."/>
            <person name="Paulet D."/>
            <person name="Byrnes E.J. III"/>
            <person name="Yadav V."/>
            <person name="Chatterjee G."/>
            <person name="Mullapudi N."/>
            <person name="Hon C.-C."/>
            <person name="Billmyre R.B."/>
            <person name="Brunel F."/>
            <person name="Bahn Y.-S."/>
            <person name="Chen W."/>
            <person name="Chen Y."/>
            <person name="Chow E.W.L."/>
            <person name="Coppee J.-Y."/>
            <person name="Floyd-Averette A."/>
            <person name="Gaillardin C."/>
            <person name="Gerik K.J."/>
            <person name="Goldberg J."/>
            <person name="Gonzalez-Hilarion S."/>
            <person name="Gujja S."/>
            <person name="Hamlin J.L."/>
            <person name="Hsueh Y.-P."/>
            <person name="Ianiri G."/>
            <person name="Jones S."/>
            <person name="Kodira C.D."/>
            <person name="Kozubowski L."/>
            <person name="Lam W."/>
            <person name="Marra M."/>
            <person name="Mesner L.D."/>
            <person name="Mieczkowski P.A."/>
            <person name="Moyrand F."/>
            <person name="Nielsen K."/>
            <person name="Proux C."/>
            <person name="Rossignol T."/>
            <person name="Schein J.E."/>
            <person name="Sun S."/>
            <person name="Wollschlaeger C."/>
            <person name="Wood I.A."/>
            <person name="Zeng Q."/>
            <person name="Neuveglise C."/>
            <person name="Newlon C.S."/>
            <person name="Perfect J.R."/>
            <person name="Lodge J.K."/>
            <person name="Idnurm A."/>
            <person name="Stajich J.E."/>
            <person name="Kronstad J.W."/>
            <person name="Sanyal K."/>
            <person name="Heitman J."/>
            <person name="Fraser J.A."/>
            <person name="Cuomo C.A."/>
            <person name="Dietrich F.S."/>
        </authorList>
    </citation>
    <scope>NUCLEOTIDE SEQUENCE [LARGE SCALE GENOMIC DNA]</scope>
    <source>
        <strain evidence="13">H99 / ATCC 208821 / CBS 10515 / FGSC 9487</strain>
    </source>
</reference>
<reference evidence="11" key="2">
    <citation type="journal article" date="2014" name="Cell">
        <title>Dnmt1-independent CG methylation contributes to nucleosome positioning in diverse eukaryotes.</title>
        <authorList>
            <person name="Huff J.T."/>
            <person name="Zilberman D."/>
        </authorList>
    </citation>
    <scope>FUNCTION</scope>
    <scope>DISRUPTION PHENOTYPE</scope>
</reference>
<reference evidence="11" key="3">
    <citation type="journal article" date="2020" name="Cell">
        <title>Evolutionary Persistence of DNA Methylation for Millions of Years after Ancient Loss of a De Novo Methyltransferase.</title>
        <authorList>
            <person name="Catania S."/>
            <person name="Dumesic P.A."/>
            <person name="Pimentel H."/>
            <person name="Nasif A."/>
            <person name="Stoddard C.I."/>
            <person name="Burke J.E."/>
            <person name="Diedrich J.K."/>
            <person name="Cook S."/>
            <person name="Shea T."/>
            <person name="Geinger E."/>
            <person name="Lintner R."/>
            <person name="Yates J.R. III"/>
            <person name="Hajkova P."/>
            <person name="Narlikar G.J."/>
            <person name="Cuomo C.A."/>
            <person name="Pritchard J.K."/>
            <person name="Madhani H.D."/>
        </authorList>
    </citation>
    <scope>FUNCTION</scope>
    <scope>CATALYTIC ACTIVITY</scope>
    <scope>INTERACTION WITH SWI6</scope>
    <scope>SUBCELLULAR LOCATION</scope>
    <scope>DOMAIN</scope>
    <scope>DISRUPTION PHENOTYPE</scope>
    <scope>MUTAGENESIS OF 87-TRP--TYR-90; CYS-440 AND LYS-1469</scope>
</reference>
<reference evidence="11" key="4">
    <citation type="journal article" date="2020" name="Mol. Cell">
        <title>ATP Hydrolysis by the SNF2 Domain of Dnmt5 Is Coupled to Both Specific Recognition and Modification of Hemimethylated DNA.</title>
        <authorList>
            <person name="Dumesic P.A."/>
            <person name="Stoddard C.I."/>
            <person name="Catania S."/>
            <person name="Narlikar G.J."/>
            <person name="Madhani H.D."/>
        </authorList>
    </citation>
    <scope>FUNCTION</scope>
    <scope>CATALYTIC ACTIVITY</scope>
    <scope>COFACTOR</scope>
    <scope>ACTIVITY REGULATION</scope>
    <scope>BIOPHYSICOCHEMICAL PROPERTIES</scope>
    <scope>DOMAIN</scope>
    <scope>MUTAGENESIS OF LYS-1469</scope>
</reference>
<keyword id="KW-0002">3D-structure</keyword>
<keyword id="KW-0067">ATP-binding</keyword>
<keyword id="KW-0158">Chromosome</keyword>
<keyword id="KW-0238">DNA-binding</keyword>
<keyword id="KW-0378">Hydrolase</keyword>
<keyword id="KW-0488">Methylation</keyword>
<keyword id="KW-0489">Methyltransferase</keyword>
<keyword id="KW-0547">Nucleotide-binding</keyword>
<keyword id="KW-0539">Nucleus</keyword>
<keyword id="KW-0677">Repeat</keyword>
<keyword id="KW-0808">Transferase</keyword>
<dbReference type="EC" id="3.6.4.-" evidence="7 8"/>
<dbReference type="EMBL" id="CP003822">
    <property type="protein sequence ID" value="AFR94062.2"/>
    <property type="molecule type" value="Genomic_DNA"/>
</dbReference>
<dbReference type="RefSeq" id="XP_012047964.1">
    <property type="nucleotide sequence ID" value="XM_012192574.1"/>
</dbReference>
<dbReference type="PDB" id="7R76">
    <property type="method" value="EM"/>
    <property type="resolution" value="3.20 A"/>
    <property type="chains" value="A=58-2377"/>
</dbReference>
<dbReference type="PDB" id="7R77">
    <property type="method" value="EM"/>
    <property type="resolution" value="3.00 A"/>
    <property type="chains" value="A=58-2377"/>
</dbReference>
<dbReference type="PDB" id="7R78">
    <property type="method" value="EM"/>
    <property type="resolution" value="3.50 A"/>
    <property type="chains" value="A=58-2377"/>
</dbReference>
<dbReference type="PDB" id="7T02">
    <property type="method" value="EM"/>
    <property type="resolution" value="3.80 A"/>
    <property type="chains" value="A=58-2377"/>
</dbReference>
<dbReference type="PDBsum" id="7R76"/>
<dbReference type="PDBsum" id="7R77"/>
<dbReference type="PDBsum" id="7R78"/>
<dbReference type="PDBsum" id="7T02"/>
<dbReference type="EMDB" id="EMD-24292"/>
<dbReference type="EMDB" id="EMD-24294"/>
<dbReference type="EMDB" id="EMD-24295"/>
<dbReference type="EMDB" id="EMD-25577"/>
<dbReference type="SMR" id="J9VI03"/>
<dbReference type="GeneID" id="23890389"/>
<dbReference type="KEGG" id="cng:CNAG_07552"/>
<dbReference type="VEuPathDB" id="FungiDB:CNAG_07552"/>
<dbReference type="HOGENOM" id="CLU_000796_0_0_1"/>
<dbReference type="OrthoDB" id="3257at5206"/>
<dbReference type="Proteomes" id="UP000010091">
    <property type="component" value="Chromosome 3"/>
</dbReference>
<dbReference type="GO" id="GO:0005694">
    <property type="term" value="C:chromosome"/>
    <property type="evidence" value="ECO:0007669"/>
    <property type="project" value="UniProtKB-SubCell"/>
</dbReference>
<dbReference type="GO" id="GO:0005634">
    <property type="term" value="C:nucleus"/>
    <property type="evidence" value="ECO:0000305"/>
    <property type="project" value="UniProtKB"/>
</dbReference>
<dbReference type="GO" id="GO:0005524">
    <property type="term" value="F:ATP binding"/>
    <property type="evidence" value="ECO:0007669"/>
    <property type="project" value="UniProtKB-KW"/>
</dbReference>
<dbReference type="GO" id="GO:0016887">
    <property type="term" value="F:ATP hydrolysis activity"/>
    <property type="evidence" value="ECO:0000314"/>
    <property type="project" value="UniProtKB"/>
</dbReference>
<dbReference type="GO" id="GO:0120328">
    <property type="term" value="F:ATP-dependent DNA (cytosine-5-)-methyltransferase activity"/>
    <property type="evidence" value="ECO:0000314"/>
    <property type="project" value="UniProtKB"/>
</dbReference>
<dbReference type="GO" id="GO:0003682">
    <property type="term" value="F:chromatin binding"/>
    <property type="evidence" value="ECO:0000314"/>
    <property type="project" value="UniProtKB"/>
</dbReference>
<dbReference type="GO" id="GO:0003886">
    <property type="term" value="F:DNA (cytosine-5-)-methyltransferase activity"/>
    <property type="evidence" value="ECO:0000315"/>
    <property type="project" value="UniProtKB"/>
</dbReference>
<dbReference type="GO" id="GO:0043565">
    <property type="term" value="F:sequence-specific DNA binding"/>
    <property type="evidence" value="ECO:0000314"/>
    <property type="project" value="UniProtKB"/>
</dbReference>
<dbReference type="GO" id="GO:0006346">
    <property type="term" value="P:DNA methylation-dependent constitutive heterochromatin formation"/>
    <property type="evidence" value="ECO:0000315"/>
    <property type="project" value="UniProtKB"/>
</dbReference>
<dbReference type="GO" id="GO:0006281">
    <property type="term" value="P:DNA repair"/>
    <property type="evidence" value="ECO:0007669"/>
    <property type="project" value="TreeGrafter"/>
</dbReference>
<dbReference type="GO" id="GO:0032259">
    <property type="term" value="P:methylation"/>
    <property type="evidence" value="ECO:0007669"/>
    <property type="project" value="UniProtKB-KW"/>
</dbReference>
<dbReference type="CDD" id="cd00024">
    <property type="entry name" value="CD_CSD"/>
    <property type="match status" value="1"/>
</dbReference>
<dbReference type="CDD" id="cd18793">
    <property type="entry name" value="SF2_C_SNF"/>
    <property type="match status" value="1"/>
</dbReference>
<dbReference type="Gene3D" id="2.40.50.40">
    <property type="match status" value="1"/>
</dbReference>
<dbReference type="Gene3D" id="3.40.50.300">
    <property type="entry name" value="P-loop containing nucleotide triphosphate hydrolases"/>
    <property type="match status" value="1"/>
</dbReference>
<dbReference type="Gene3D" id="3.40.50.10810">
    <property type="entry name" value="Tandem AAA-ATPase domain"/>
    <property type="match status" value="1"/>
</dbReference>
<dbReference type="Gene3D" id="3.40.50.150">
    <property type="entry name" value="Vaccinia Virus protein VP39"/>
    <property type="match status" value="1"/>
</dbReference>
<dbReference type="InterPro" id="IPR001525">
    <property type="entry name" value="C5_MeTfrase"/>
</dbReference>
<dbReference type="InterPro" id="IPR016197">
    <property type="entry name" value="Chromo-like_dom_sf"/>
</dbReference>
<dbReference type="InterPro" id="IPR000953">
    <property type="entry name" value="Chromo/chromo_shadow_dom"/>
</dbReference>
<dbReference type="InterPro" id="IPR023780">
    <property type="entry name" value="Chromo_domain"/>
</dbReference>
<dbReference type="InterPro" id="IPR014001">
    <property type="entry name" value="Helicase_ATP-bd"/>
</dbReference>
<dbReference type="InterPro" id="IPR001650">
    <property type="entry name" value="Helicase_C-like"/>
</dbReference>
<dbReference type="InterPro" id="IPR027417">
    <property type="entry name" value="P-loop_NTPase"/>
</dbReference>
<dbReference type="InterPro" id="IPR029063">
    <property type="entry name" value="SAM-dependent_MTases_sf"/>
</dbReference>
<dbReference type="InterPro" id="IPR038718">
    <property type="entry name" value="SNF2-like_sf"/>
</dbReference>
<dbReference type="InterPro" id="IPR049730">
    <property type="entry name" value="SNF2/RAD54-like_C"/>
</dbReference>
<dbReference type="InterPro" id="IPR000330">
    <property type="entry name" value="SNF2_N"/>
</dbReference>
<dbReference type="InterPro" id="IPR050628">
    <property type="entry name" value="SNF2_RAD54_helicase_TF"/>
</dbReference>
<dbReference type="PANTHER" id="PTHR45626:SF26">
    <property type="entry name" value="FAMILY HELICASE, PUTATIVE (AFU_ORTHOLOGUE AFUA_2G09120)-RELATED"/>
    <property type="match status" value="1"/>
</dbReference>
<dbReference type="PANTHER" id="PTHR45626">
    <property type="entry name" value="TRANSCRIPTION TERMINATION FACTOR 2-RELATED"/>
    <property type="match status" value="1"/>
</dbReference>
<dbReference type="Pfam" id="PF00385">
    <property type="entry name" value="Chromo"/>
    <property type="match status" value="1"/>
</dbReference>
<dbReference type="Pfam" id="PF00145">
    <property type="entry name" value="DNA_methylase"/>
    <property type="match status" value="1"/>
</dbReference>
<dbReference type="Pfam" id="PF00271">
    <property type="entry name" value="Helicase_C"/>
    <property type="match status" value="1"/>
</dbReference>
<dbReference type="Pfam" id="PF00176">
    <property type="entry name" value="SNF2-rel_dom"/>
    <property type="match status" value="1"/>
</dbReference>
<dbReference type="SMART" id="SM00298">
    <property type="entry name" value="CHROMO"/>
    <property type="match status" value="1"/>
</dbReference>
<dbReference type="SMART" id="SM00487">
    <property type="entry name" value="DEXDc"/>
    <property type="match status" value="1"/>
</dbReference>
<dbReference type="SUPFAM" id="SSF54160">
    <property type="entry name" value="Chromo domain-like"/>
    <property type="match status" value="1"/>
</dbReference>
<dbReference type="SUPFAM" id="SSF52540">
    <property type="entry name" value="P-loop containing nucleoside triphosphate hydrolases"/>
    <property type="match status" value="2"/>
</dbReference>
<dbReference type="SUPFAM" id="SSF53335">
    <property type="entry name" value="S-adenosyl-L-methionine-dependent methyltransferases"/>
    <property type="match status" value="1"/>
</dbReference>
<dbReference type="PROSITE" id="PS50013">
    <property type="entry name" value="CHROMO_2"/>
    <property type="match status" value="1"/>
</dbReference>
<dbReference type="PROSITE" id="PS51192">
    <property type="entry name" value="HELICASE_ATP_BIND_1"/>
    <property type="match status" value="1"/>
</dbReference>
<dbReference type="PROSITE" id="PS51194">
    <property type="entry name" value="HELICASE_CTER"/>
    <property type="match status" value="1"/>
</dbReference>
<accession>J9VI03</accession>